<reference key="1">
    <citation type="journal article" date="2008" name="Chem. Biol. Interact.">
        <title>Extending the Bacillus cereus group genomics to putative food-borne pathogens of different toxicity.</title>
        <authorList>
            <person name="Lapidus A."/>
            <person name="Goltsman E."/>
            <person name="Auger S."/>
            <person name="Galleron N."/>
            <person name="Segurens B."/>
            <person name="Dossat C."/>
            <person name="Land M.L."/>
            <person name="Broussolle V."/>
            <person name="Brillard J."/>
            <person name="Guinebretiere M.-H."/>
            <person name="Sanchis V."/>
            <person name="Nguen-the C."/>
            <person name="Lereclus D."/>
            <person name="Richardson P."/>
            <person name="Wincker P."/>
            <person name="Weissenbach J."/>
            <person name="Ehrlich S.D."/>
            <person name="Sorokin A."/>
        </authorList>
    </citation>
    <scope>NUCLEOTIDE SEQUENCE [LARGE SCALE GENOMIC DNA]</scope>
    <source>
        <strain>DSM 22905 / CIP 110041 / 391-98 / NVH 391-98</strain>
    </source>
</reference>
<keyword id="KW-0328">Glycosyltransferase</keyword>
<keyword id="KW-0808">Transferase</keyword>
<feature type="chain" id="PRO_1000088102" description="Purine nucleoside phosphorylase DeoD-type">
    <location>
        <begin position="1"/>
        <end position="235"/>
    </location>
</feature>
<feature type="active site" description="Proton donor" evidence="2">
    <location>
        <position position="204"/>
    </location>
</feature>
<feature type="binding site" evidence="1">
    <location>
        <position position="4"/>
    </location>
    <ligand>
        <name>a purine D-ribonucleoside</name>
        <dbReference type="ChEBI" id="CHEBI:142355"/>
        <note>ligand shared between dimeric partners</note>
    </ligand>
</feature>
<feature type="binding site" description="in other chain" evidence="1">
    <location>
        <position position="20"/>
    </location>
    <ligand>
        <name>phosphate</name>
        <dbReference type="ChEBI" id="CHEBI:43474"/>
        <note>ligand shared between dimeric partners</note>
    </ligand>
</feature>
<feature type="binding site" description="in other chain" evidence="1">
    <location>
        <position position="24"/>
    </location>
    <ligand>
        <name>phosphate</name>
        <dbReference type="ChEBI" id="CHEBI:43474"/>
        <note>ligand shared between dimeric partners</note>
    </ligand>
</feature>
<feature type="binding site" evidence="1">
    <location>
        <position position="43"/>
    </location>
    <ligand>
        <name>phosphate</name>
        <dbReference type="ChEBI" id="CHEBI:43474"/>
        <note>ligand shared between dimeric partners</note>
    </ligand>
</feature>
<feature type="binding site" description="in other chain" evidence="1">
    <location>
        <begin position="87"/>
        <end position="90"/>
    </location>
    <ligand>
        <name>phosphate</name>
        <dbReference type="ChEBI" id="CHEBI:43474"/>
        <note>ligand shared between dimeric partners</note>
    </ligand>
</feature>
<feature type="binding site" description="in other chain" evidence="1">
    <location>
        <position position="162"/>
    </location>
    <ligand>
        <name>a purine D-ribonucleoside</name>
        <dbReference type="ChEBI" id="CHEBI:142355"/>
        <note>ligand shared between dimeric partners</note>
    </ligand>
</feature>
<feature type="binding site" description="in other chain" evidence="1">
    <location>
        <begin position="179"/>
        <end position="181"/>
    </location>
    <ligand>
        <name>a purine D-ribonucleoside</name>
        <dbReference type="ChEBI" id="CHEBI:142355"/>
        <note>ligand shared between dimeric partners</note>
    </ligand>
</feature>
<feature type="binding site" description="in other chain" evidence="1">
    <location>
        <begin position="203"/>
        <end position="204"/>
    </location>
    <ligand>
        <name>a purine D-ribonucleoside</name>
        <dbReference type="ChEBI" id="CHEBI:142355"/>
        <note>ligand shared between dimeric partners</note>
    </ligand>
</feature>
<feature type="site" description="Important for catalytic activity" evidence="2">
    <location>
        <position position="217"/>
    </location>
</feature>
<protein>
    <recommendedName>
        <fullName evidence="2">Purine nucleoside phosphorylase DeoD-type</fullName>
        <shortName evidence="2">PNP</shortName>
        <ecNumber evidence="2">2.4.2.1</ecNumber>
    </recommendedName>
</protein>
<organism>
    <name type="scientific">Bacillus cytotoxicus (strain DSM 22905 / CIP 110041 / 391-98 / NVH 391-98)</name>
    <dbReference type="NCBI Taxonomy" id="315749"/>
    <lineage>
        <taxon>Bacteria</taxon>
        <taxon>Bacillati</taxon>
        <taxon>Bacillota</taxon>
        <taxon>Bacilli</taxon>
        <taxon>Bacillales</taxon>
        <taxon>Bacillaceae</taxon>
        <taxon>Bacillus</taxon>
        <taxon>Bacillus cereus group</taxon>
    </lineage>
</organism>
<proteinExistence type="inferred from homology"/>
<accession>A7GN01</accession>
<name>DEOD_BACCN</name>
<gene>
    <name evidence="2" type="primary">deoD</name>
    <name type="ordered locus">Bcer98_1187</name>
</gene>
<comment type="function">
    <text evidence="2">Catalyzes the reversible phosphorolytic breakdown of the N-glycosidic bond in the beta-(deoxy)ribonucleoside molecules, with the formation of the corresponding free purine bases and pentose-1-phosphate.</text>
</comment>
<comment type="catalytic activity">
    <reaction evidence="2">
        <text>a purine D-ribonucleoside + phosphate = a purine nucleobase + alpha-D-ribose 1-phosphate</text>
        <dbReference type="Rhea" id="RHEA:19805"/>
        <dbReference type="ChEBI" id="CHEBI:26386"/>
        <dbReference type="ChEBI" id="CHEBI:43474"/>
        <dbReference type="ChEBI" id="CHEBI:57720"/>
        <dbReference type="ChEBI" id="CHEBI:142355"/>
        <dbReference type="EC" id="2.4.2.1"/>
    </reaction>
</comment>
<comment type="catalytic activity">
    <reaction evidence="2">
        <text>a purine 2'-deoxy-D-ribonucleoside + phosphate = a purine nucleobase + 2-deoxy-alpha-D-ribose 1-phosphate</text>
        <dbReference type="Rhea" id="RHEA:36431"/>
        <dbReference type="ChEBI" id="CHEBI:26386"/>
        <dbReference type="ChEBI" id="CHEBI:43474"/>
        <dbReference type="ChEBI" id="CHEBI:57259"/>
        <dbReference type="ChEBI" id="CHEBI:142361"/>
        <dbReference type="EC" id="2.4.2.1"/>
    </reaction>
</comment>
<comment type="subunit">
    <text evidence="2">Homohexamer; trimer of homodimers.</text>
</comment>
<comment type="similarity">
    <text evidence="2">Belongs to the PNP/UDP phosphorylase family.</text>
</comment>
<sequence length="235" mass="25669">MSVHIEAKQGEIAESILLPGDPLRAKYIAETFLEDVTCYNNVRGMLGFTGTYKGKRVSVQGTGMGVPSISIYVNELIQSYGVKNLIRVGTCGAIQKDVKVRDVIIAMTACTDSNINRLTFPGFDFAPAANFDLLKKAYDAGTEKGLHIRVGNVLTADVFYRESMDMVKKLGDYGVLAVEMETTALYTLAAKYGVNALSVLTVSDHIFTGEETTAEERQTTFNEMIEIALEAAIQQ</sequence>
<evidence type="ECO:0000250" key="1">
    <source>
        <dbReference type="UniProtKB" id="P50389"/>
    </source>
</evidence>
<evidence type="ECO:0000255" key="2">
    <source>
        <dbReference type="HAMAP-Rule" id="MF_01627"/>
    </source>
</evidence>
<dbReference type="EC" id="2.4.2.1" evidence="2"/>
<dbReference type="EMBL" id="CP000764">
    <property type="protein sequence ID" value="ABS21509.1"/>
    <property type="molecule type" value="Genomic_DNA"/>
</dbReference>
<dbReference type="RefSeq" id="WP_011984262.1">
    <property type="nucleotide sequence ID" value="NC_009674.1"/>
</dbReference>
<dbReference type="SMR" id="A7GN01"/>
<dbReference type="STRING" id="315749.Bcer98_1187"/>
<dbReference type="GeneID" id="33896538"/>
<dbReference type="KEGG" id="bcy:Bcer98_1187"/>
<dbReference type="eggNOG" id="COG0813">
    <property type="taxonomic scope" value="Bacteria"/>
</dbReference>
<dbReference type="HOGENOM" id="CLU_068457_2_0_9"/>
<dbReference type="OrthoDB" id="9782889at2"/>
<dbReference type="Proteomes" id="UP000002300">
    <property type="component" value="Chromosome"/>
</dbReference>
<dbReference type="GO" id="GO:0005829">
    <property type="term" value="C:cytosol"/>
    <property type="evidence" value="ECO:0007669"/>
    <property type="project" value="TreeGrafter"/>
</dbReference>
<dbReference type="GO" id="GO:0004731">
    <property type="term" value="F:purine-nucleoside phosphorylase activity"/>
    <property type="evidence" value="ECO:0007669"/>
    <property type="project" value="UniProtKB-UniRule"/>
</dbReference>
<dbReference type="GO" id="GO:0006152">
    <property type="term" value="P:purine nucleoside catabolic process"/>
    <property type="evidence" value="ECO:0007669"/>
    <property type="project" value="TreeGrafter"/>
</dbReference>
<dbReference type="CDD" id="cd09006">
    <property type="entry name" value="PNP_EcPNPI-like"/>
    <property type="match status" value="1"/>
</dbReference>
<dbReference type="Gene3D" id="3.40.50.1580">
    <property type="entry name" value="Nucleoside phosphorylase domain"/>
    <property type="match status" value="1"/>
</dbReference>
<dbReference type="HAMAP" id="MF_01627">
    <property type="entry name" value="Pur_nucleosid_phosp"/>
    <property type="match status" value="1"/>
</dbReference>
<dbReference type="InterPro" id="IPR004402">
    <property type="entry name" value="DeoD-type"/>
</dbReference>
<dbReference type="InterPro" id="IPR018016">
    <property type="entry name" value="Nucleoside_phosphorylase_CS"/>
</dbReference>
<dbReference type="InterPro" id="IPR000845">
    <property type="entry name" value="Nucleoside_phosphorylase_d"/>
</dbReference>
<dbReference type="InterPro" id="IPR035994">
    <property type="entry name" value="Nucleoside_phosphorylase_sf"/>
</dbReference>
<dbReference type="NCBIfam" id="TIGR00107">
    <property type="entry name" value="deoD"/>
    <property type="match status" value="1"/>
</dbReference>
<dbReference type="NCBIfam" id="NF004489">
    <property type="entry name" value="PRK05819.1"/>
    <property type="match status" value="1"/>
</dbReference>
<dbReference type="NCBIfam" id="NF009914">
    <property type="entry name" value="PRK13374.1"/>
    <property type="match status" value="1"/>
</dbReference>
<dbReference type="PANTHER" id="PTHR43691:SF11">
    <property type="entry name" value="FI09636P-RELATED"/>
    <property type="match status" value="1"/>
</dbReference>
<dbReference type="PANTHER" id="PTHR43691">
    <property type="entry name" value="URIDINE PHOSPHORYLASE"/>
    <property type="match status" value="1"/>
</dbReference>
<dbReference type="Pfam" id="PF01048">
    <property type="entry name" value="PNP_UDP_1"/>
    <property type="match status" value="1"/>
</dbReference>
<dbReference type="SUPFAM" id="SSF53167">
    <property type="entry name" value="Purine and uridine phosphorylases"/>
    <property type="match status" value="1"/>
</dbReference>
<dbReference type="PROSITE" id="PS01232">
    <property type="entry name" value="PNP_UDP_1"/>
    <property type="match status" value="1"/>
</dbReference>